<name>ILVD_YERPP</name>
<feature type="chain" id="PRO_1000001086" description="Dihydroxy-acid dehydratase">
    <location>
        <begin position="1"/>
        <end position="616"/>
    </location>
</feature>
<feature type="active site" description="Proton acceptor" evidence="1">
    <location>
        <position position="517"/>
    </location>
</feature>
<feature type="binding site" evidence="1">
    <location>
        <position position="81"/>
    </location>
    <ligand>
        <name>Mg(2+)</name>
        <dbReference type="ChEBI" id="CHEBI:18420"/>
    </ligand>
</feature>
<feature type="binding site" evidence="1">
    <location>
        <position position="122"/>
    </location>
    <ligand>
        <name>[2Fe-2S] cluster</name>
        <dbReference type="ChEBI" id="CHEBI:190135"/>
    </ligand>
</feature>
<feature type="binding site" evidence="1">
    <location>
        <position position="123"/>
    </location>
    <ligand>
        <name>Mg(2+)</name>
        <dbReference type="ChEBI" id="CHEBI:18420"/>
    </ligand>
</feature>
<feature type="binding site" description="via carbamate group" evidence="1">
    <location>
        <position position="124"/>
    </location>
    <ligand>
        <name>Mg(2+)</name>
        <dbReference type="ChEBI" id="CHEBI:18420"/>
    </ligand>
</feature>
<feature type="binding site" evidence="1">
    <location>
        <position position="195"/>
    </location>
    <ligand>
        <name>[2Fe-2S] cluster</name>
        <dbReference type="ChEBI" id="CHEBI:190135"/>
    </ligand>
</feature>
<feature type="binding site" evidence="1">
    <location>
        <position position="491"/>
    </location>
    <ligand>
        <name>Mg(2+)</name>
        <dbReference type="ChEBI" id="CHEBI:18420"/>
    </ligand>
</feature>
<feature type="modified residue" description="N6-carboxylysine" evidence="1">
    <location>
        <position position="124"/>
    </location>
</feature>
<protein>
    <recommendedName>
        <fullName evidence="1">Dihydroxy-acid dehydratase</fullName>
        <shortName evidence="1">DAD</shortName>
        <ecNumber evidence="1">4.2.1.9</ecNumber>
    </recommendedName>
</protein>
<gene>
    <name evidence="1" type="primary">ilvD</name>
    <name type="ordered locus">YPDSF_3510</name>
</gene>
<dbReference type="EC" id="4.2.1.9" evidence="1"/>
<dbReference type="EMBL" id="CP000668">
    <property type="protein sequence ID" value="ABP41860.1"/>
    <property type="molecule type" value="Genomic_DNA"/>
</dbReference>
<dbReference type="RefSeq" id="WP_002212014.1">
    <property type="nucleotide sequence ID" value="NZ_CP009715.1"/>
</dbReference>
<dbReference type="SMR" id="A4TRE8"/>
<dbReference type="GeneID" id="57974808"/>
<dbReference type="KEGG" id="ypp:YPDSF_3510"/>
<dbReference type="PATRIC" id="fig|386656.14.peg.810"/>
<dbReference type="UniPathway" id="UPA00047">
    <property type="reaction ID" value="UER00057"/>
</dbReference>
<dbReference type="UniPathway" id="UPA00049">
    <property type="reaction ID" value="UER00061"/>
</dbReference>
<dbReference type="GO" id="GO:0005829">
    <property type="term" value="C:cytosol"/>
    <property type="evidence" value="ECO:0007669"/>
    <property type="project" value="TreeGrafter"/>
</dbReference>
<dbReference type="GO" id="GO:0051537">
    <property type="term" value="F:2 iron, 2 sulfur cluster binding"/>
    <property type="evidence" value="ECO:0007669"/>
    <property type="project" value="UniProtKB-UniRule"/>
</dbReference>
<dbReference type="GO" id="GO:0004160">
    <property type="term" value="F:dihydroxy-acid dehydratase activity"/>
    <property type="evidence" value="ECO:0007669"/>
    <property type="project" value="UniProtKB-UniRule"/>
</dbReference>
<dbReference type="GO" id="GO:0000287">
    <property type="term" value="F:magnesium ion binding"/>
    <property type="evidence" value="ECO:0007669"/>
    <property type="project" value="UniProtKB-UniRule"/>
</dbReference>
<dbReference type="GO" id="GO:0009097">
    <property type="term" value="P:isoleucine biosynthetic process"/>
    <property type="evidence" value="ECO:0007669"/>
    <property type="project" value="UniProtKB-UniRule"/>
</dbReference>
<dbReference type="GO" id="GO:0009099">
    <property type="term" value="P:L-valine biosynthetic process"/>
    <property type="evidence" value="ECO:0007669"/>
    <property type="project" value="UniProtKB-UniRule"/>
</dbReference>
<dbReference type="FunFam" id="3.50.30.80:FF:000001">
    <property type="entry name" value="Dihydroxy-acid dehydratase"/>
    <property type="match status" value="1"/>
</dbReference>
<dbReference type="Gene3D" id="3.50.30.80">
    <property type="entry name" value="IlvD/EDD C-terminal domain-like"/>
    <property type="match status" value="1"/>
</dbReference>
<dbReference type="HAMAP" id="MF_00012">
    <property type="entry name" value="IlvD"/>
    <property type="match status" value="1"/>
</dbReference>
<dbReference type="InterPro" id="IPR042096">
    <property type="entry name" value="Dihydro-acid_dehy_C"/>
</dbReference>
<dbReference type="InterPro" id="IPR004404">
    <property type="entry name" value="DihydroxyA_deHydtase"/>
</dbReference>
<dbReference type="InterPro" id="IPR020558">
    <property type="entry name" value="DiOHA_6PGluconate_deHydtase_CS"/>
</dbReference>
<dbReference type="InterPro" id="IPR056740">
    <property type="entry name" value="ILV_EDD_C"/>
</dbReference>
<dbReference type="InterPro" id="IPR000581">
    <property type="entry name" value="ILV_EDD_N"/>
</dbReference>
<dbReference type="InterPro" id="IPR037237">
    <property type="entry name" value="IlvD/EDD_N"/>
</dbReference>
<dbReference type="NCBIfam" id="TIGR00110">
    <property type="entry name" value="ilvD"/>
    <property type="match status" value="1"/>
</dbReference>
<dbReference type="NCBIfam" id="NF009103">
    <property type="entry name" value="PRK12448.1"/>
    <property type="match status" value="1"/>
</dbReference>
<dbReference type="PANTHER" id="PTHR43661">
    <property type="entry name" value="D-XYLONATE DEHYDRATASE"/>
    <property type="match status" value="1"/>
</dbReference>
<dbReference type="PANTHER" id="PTHR43661:SF3">
    <property type="entry name" value="D-XYLONATE DEHYDRATASE YAGF-RELATED"/>
    <property type="match status" value="1"/>
</dbReference>
<dbReference type="Pfam" id="PF24877">
    <property type="entry name" value="ILV_EDD_C"/>
    <property type="match status" value="1"/>
</dbReference>
<dbReference type="Pfam" id="PF00920">
    <property type="entry name" value="ILVD_EDD_N"/>
    <property type="match status" value="1"/>
</dbReference>
<dbReference type="SUPFAM" id="SSF143975">
    <property type="entry name" value="IlvD/EDD N-terminal domain-like"/>
    <property type="match status" value="1"/>
</dbReference>
<dbReference type="SUPFAM" id="SSF52016">
    <property type="entry name" value="LeuD/IlvD-like"/>
    <property type="match status" value="1"/>
</dbReference>
<dbReference type="PROSITE" id="PS00886">
    <property type="entry name" value="ILVD_EDD_1"/>
    <property type="match status" value="1"/>
</dbReference>
<dbReference type="PROSITE" id="PS00887">
    <property type="entry name" value="ILVD_EDD_2"/>
    <property type="match status" value="1"/>
</dbReference>
<keyword id="KW-0001">2Fe-2S</keyword>
<keyword id="KW-0028">Amino-acid biosynthesis</keyword>
<keyword id="KW-0100">Branched-chain amino acid biosynthesis</keyword>
<keyword id="KW-0408">Iron</keyword>
<keyword id="KW-0411">Iron-sulfur</keyword>
<keyword id="KW-0456">Lyase</keyword>
<keyword id="KW-0460">Magnesium</keyword>
<keyword id="KW-0479">Metal-binding</keyword>
<organism>
    <name type="scientific">Yersinia pestis (strain Pestoides F)</name>
    <dbReference type="NCBI Taxonomy" id="386656"/>
    <lineage>
        <taxon>Bacteria</taxon>
        <taxon>Pseudomonadati</taxon>
        <taxon>Pseudomonadota</taxon>
        <taxon>Gammaproteobacteria</taxon>
        <taxon>Enterobacterales</taxon>
        <taxon>Yersiniaceae</taxon>
        <taxon>Yersinia</taxon>
    </lineage>
</organism>
<comment type="function">
    <text evidence="1">Functions in the biosynthesis of branched-chain amino acids. Catalyzes the dehydration of (2R,3R)-2,3-dihydroxy-3-methylpentanoate (2,3-dihydroxy-3-methylvalerate) into 2-oxo-3-methylpentanoate (2-oxo-3-methylvalerate) and of (2R)-2,3-dihydroxy-3-methylbutanoate (2,3-dihydroxyisovalerate) into 2-oxo-3-methylbutanoate (2-oxoisovalerate), the penultimate precursor to L-isoleucine and L-valine, respectively.</text>
</comment>
<comment type="catalytic activity">
    <reaction evidence="1">
        <text>(2R)-2,3-dihydroxy-3-methylbutanoate = 3-methyl-2-oxobutanoate + H2O</text>
        <dbReference type="Rhea" id="RHEA:24809"/>
        <dbReference type="ChEBI" id="CHEBI:11851"/>
        <dbReference type="ChEBI" id="CHEBI:15377"/>
        <dbReference type="ChEBI" id="CHEBI:49072"/>
        <dbReference type="EC" id="4.2.1.9"/>
    </reaction>
    <physiologicalReaction direction="left-to-right" evidence="1">
        <dbReference type="Rhea" id="RHEA:24810"/>
    </physiologicalReaction>
</comment>
<comment type="catalytic activity">
    <reaction evidence="1">
        <text>(2R,3R)-2,3-dihydroxy-3-methylpentanoate = (S)-3-methyl-2-oxopentanoate + H2O</text>
        <dbReference type="Rhea" id="RHEA:27694"/>
        <dbReference type="ChEBI" id="CHEBI:15377"/>
        <dbReference type="ChEBI" id="CHEBI:35146"/>
        <dbReference type="ChEBI" id="CHEBI:49258"/>
        <dbReference type="EC" id="4.2.1.9"/>
    </reaction>
    <physiologicalReaction direction="left-to-right" evidence="1">
        <dbReference type="Rhea" id="RHEA:27695"/>
    </physiologicalReaction>
</comment>
<comment type="cofactor">
    <cofactor evidence="1">
        <name>[2Fe-2S] cluster</name>
        <dbReference type="ChEBI" id="CHEBI:190135"/>
    </cofactor>
    <text evidence="1">Binds 1 [2Fe-2S] cluster per subunit. This cluster acts as a Lewis acid cofactor.</text>
</comment>
<comment type="cofactor">
    <cofactor evidence="1">
        <name>Mg(2+)</name>
        <dbReference type="ChEBI" id="CHEBI:18420"/>
    </cofactor>
</comment>
<comment type="pathway">
    <text evidence="1">Amino-acid biosynthesis; L-isoleucine biosynthesis; L-isoleucine from 2-oxobutanoate: step 3/4.</text>
</comment>
<comment type="pathway">
    <text evidence="1">Amino-acid biosynthesis; L-valine biosynthesis; L-valine from pyruvate: step 3/4.</text>
</comment>
<comment type="subunit">
    <text evidence="1">Homodimer.</text>
</comment>
<comment type="similarity">
    <text evidence="1">Belongs to the IlvD/Edd family.</text>
</comment>
<accession>A4TRE8</accession>
<reference key="1">
    <citation type="submission" date="2007-02" db="EMBL/GenBank/DDBJ databases">
        <title>Complete sequence of chromosome of Yersinia pestis Pestoides F.</title>
        <authorList>
            <consortium name="US DOE Joint Genome Institute"/>
            <person name="Copeland A."/>
            <person name="Lucas S."/>
            <person name="Lapidus A."/>
            <person name="Barry K."/>
            <person name="Detter J.C."/>
            <person name="Glavina del Rio T."/>
            <person name="Hammon N."/>
            <person name="Israni S."/>
            <person name="Dalin E."/>
            <person name="Tice H."/>
            <person name="Pitluck S."/>
            <person name="Di Bartolo G."/>
            <person name="Chain P."/>
            <person name="Malfatti S."/>
            <person name="Shin M."/>
            <person name="Vergez L."/>
            <person name="Schmutz J."/>
            <person name="Larimer F."/>
            <person name="Land M."/>
            <person name="Hauser L."/>
            <person name="Worsham P."/>
            <person name="Chu M."/>
            <person name="Bearden S."/>
            <person name="Garcia E."/>
            <person name="Richardson P."/>
        </authorList>
    </citation>
    <scope>NUCLEOTIDE SEQUENCE [LARGE SCALE GENOMIC DNA]</scope>
    <source>
        <strain>Pestoides F</strain>
    </source>
</reference>
<sequence>MPKYRSHTTTHGRNMAGARALWRATGMTDDDFGKPIIAVVNSFTQFVPGHVHLRDLGKLVAEQIVASGGVAKEFNTIAVDDGIAMGHGGMLYSLPSRELIADSVEYMVNAHCADAMVCISNCDKITPGMLMASLRLNIPVIFVSGGPMEAGKTKLSDKIIKLDLIDAMIQGANPNVSDEESAQIERSACPTCGSCSGMFTANSMNCLNEALGLALPGNGSLLATHADRKQLFLDAGKHIVALTKRYYEQDDVSALPRNIANKAAFENAMILDIAMGGSTNTVLHLLAAAQEGEIDFSMTDIDHLSRKVPHLCKVAPSTQKYHMEDVHRAGGVIGILGELDRAGLLNRDVSNVLGLNLTQTLEAYDVMLTQDEGVKQMYAAGPAGIRTTKAFSQDCRYPSLDTDREEGCIRTREHAYSQDGGLAVLYGNIAADGCIVKTAGVDKDSLTFRGPAKVFESQDEAVEAILGGKVVAGDVVVIRYEGPKGGPGMQEMLYPTTYLKSMGLGKSCALLTDGRFSGGTSGLSIGHVSPEAASGGLIGLVQDGDFINIDIPNRGIVLDVSEAELAARRETEEAHGDAAWSPKGRERQVSYALRAYAMLATSADKGAVRDKSKLGG</sequence>
<proteinExistence type="inferred from homology"/>
<evidence type="ECO:0000255" key="1">
    <source>
        <dbReference type="HAMAP-Rule" id="MF_00012"/>
    </source>
</evidence>